<gene>
    <name evidence="1" type="primary">ADI1</name>
    <name type="ORF">CAWG_00324</name>
</gene>
<dbReference type="EC" id="1.13.11.54" evidence="1"/>
<dbReference type="EC" id="1.13.11.53" evidence="1"/>
<dbReference type="EMBL" id="CH672346">
    <property type="protein sequence ID" value="EEQ42126.1"/>
    <property type="molecule type" value="Genomic_DNA"/>
</dbReference>
<dbReference type="SMR" id="C4YCU0"/>
<dbReference type="PaxDb" id="5476-C4YCU0"/>
<dbReference type="VEuPathDB" id="FungiDB:CAWG_00324"/>
<dbReference type="HOGENOM" id="CLU_090154_1_1_1"/>
<dbReference type="OMA" id="NNYIKLM"/>
<dbReference type="OrthoDB" id="2461at766764"/>
<dbReference type="UniPathway" id="UPA00904">
    <property type="reaction ID" value="UER00878"/>
</dbReference>
<dbReference type="Proteomes" id="UP000001429">
    <property type="component" value="Chromosome 1, Supercontig 1.1"/>
</dbReference>
<dbReference type="GO" id="GO:0005737">
    <property type="term" value="C:cytoplasm"/>
    <property type="evidence" value="ECO:0007669"/>
    <property type="project" value="UniProtKB-SubCell"/>
</dbReference>
<dbReference type="GO" id="GO:0005634">
    <property type="term" value="C:nucleus"/>
    <property type="evidence" value="ECO:0007669"/>
    <property type="project" value="UniProtKB-SubCell"/>
</dbReference>
<dbReference type="GO" id="GO:0010308">
    <property type="term" value="F:acireductone dioxygenase (Ni2+-requiring) activity"/>
    <property type="evidence" value="ECO:0007669"/>
    <property type="project" value="UniProtKB-UniRule"/>
</dbReference>
<dbReference type="GO" id="GO:0010309">
    <property type="term" value="F:acireductone dioxygenase [iron(II)-requiring] activity"/>
    <property type="evidence" value="ECO:0007669"/>
    <property type="project" value="UniProtKB-UniRule"/>
</dbReference>
<dbReference type="GO" id="GO:0005506">
    <property type="term" value="F:iron ion binding"/>
    <property type="evidence" value="ECO:0007669"/>
    <property type="project" value="UniProtKB-UniRule"/>
</dbReference>
<dbReference type="GO" id="GO:0016151">
    <property type="term" value="F:nickel cation binding"/>
    <property type="evidence" value="ECO:0007669"/>
    <property type="project" value="UniProtKB-UniRule"/>
</dbReference>
<dbReference type="GO" id="GO:0019509">
    <property type="term" value="P:L-methionine salvage from methylthioadenosine"/>
    <property type="evidence" value="ECO:0007669"/>
    <property type="project" value="UniProtKB-UniRule"/>
</dbReference>
<dbReference type="CDD" id="cd02232">
    <property type="entry name" value="cupin_ARD"/>
    <property type="match status" value="1"/>
</dbReference>
<dbReference type="FunFam" id="2.60.120.10:FF:000099">
    <property type="entry name" value="1,2-dihydroxy-3-keto-5-methylthiopentene dioxygenase"/>
    <property type="match status" value="1"/>
</dbReference>
<dbReference type="Gene3D" id="2.60.120.10">
    <property type="entry name" value="Jelly Rolls"/>
    <property type="match status" value="1"/>
</dbReference>
<dbReference type="HAMAP" id="MF_03154">
    <property type="entry name" value="Salvage_MtnD_euk"/>
    <property type="match status" value="1"/>
</dbReference>
<dbReference type="InterPro" id="IPR004313">
    <property type="entry name" value="ARD"/>
</dbReference>
<dbReference type="InterPro" id="IPR027496">
    <property type="entry name" value="ARD_euk"/>
</dbReference>
<dbReference type="InterPro" id="IPR014710">
    <property type="entry name" value="RmlC-like_jellyroll"/>
</dbReference>
<dbReference type="InterPro" id="IPR011051">
    <property type="entry name" value="RmlC_Cupin_sf"/>
</dbReference>
<dbReference type="PANTHER" id="PTHR23418">
    <property type="entry name" value="ACIREDUCTONE DIOXYGENASE"/>
    <property type="match status" value="1"/>
</dbReference>
<dbReference type="PANTHER" id="PTHR23418:SF0">
    <property type="entry name" value="ACIREDUCTONE DIOXYGENASE"/>
    <property type="match status" value="1"/>
</dbReference>
<dbReference type="Pfam" id="PF03079">
    <property type="entry name" value="ARD"/>
    <property type="match status" value="1"/>
</dbReference>
<dbReference type="SUPFAM" id="SSF51182">
    <property type="entry name" value="RmlC-like cupins"/>
    <property type="match status" value="1"/>
</dbReference>
<organism>
    <name type="scientific">Candida albicans (strain WO-1)</name>
    <name type="common">Yeast</name>
    <dbReference type="NCBI Taxonomy" id="294748"/>
    <lineage>
        <taxon>Eukaryota</taxon>
        <taxon>Fungi</taxon>
        <taxon>Dikarya</taxon>
        <taxon>Ascomycota</taxon>
        <taxon>Saccharomycotina</taxon>
        <taxon>Pichiomycetes</taxon>
        <taxon>Debaryomycetaceae</taxon>
        <taxon>Candida/Lodderomyces clade</taxon>
        <taxon>Candida</taxon>
    </lineage>
</organism>
<keyword id="KW-0028">Amino-acid biosynthesis</keyword>
<keyword id="KW-0963">Cytoplasm</keyword>
<keyword id="KW-0223">Dioxygenase</keyword>
<keyword id="KW-0408">Iron</keyword>
<keyword id="KW-0479">Metal-binding</keyword>
<keyword id="KW-0486">Methionine biosynthesis</keyword>
<keyword id="KW-0533">Nickel</keyword>
<keyword id="KW-0539">Nucleus</keyword>
<keyword id="KW-0560">Oxidoreductase</keyword>
<proteinExistence type="inferred from homology"/>
<reference key="1">
    <citation type="journal article" date="2009" name="Nature">
        <title>Evolution of pathogenicity and sexual reproduction in eight Candida genomes.</title>
        <authorList>
            <person name="Butler G."/>
            <person name="Rasmussen M.D."/>
            <person name="Lin M.F."/>
            <person name="Santos M.A.S."/>
            <person name="Sakthikumar S."/>
            <person name="Munro C.A."/>
            <person name="Rheinbay E."/>
            <person name="Grabherr M."/>
            <person name="Forche A."/>
            <person name="Reedy J.L."/>
            <person name="Agrafioti I."/>
            <person name="Arnaud M.B."/>
            <person name="Bates S."/>
            <person name="Brown A.J.P."/>
            <person name="Brunke S."/>
            <person name="Costanzo M.C."/>
            <person name="Fitzpatrick D.A."/>
            <person name="de Groot P.W.J."/>
            <person name="Harris D."/>
            <person name="Hoyer L.L."/>
            <person name="Hube B."/>
            <person name="Klis F.M."/>
            <person name="Kodira C."/>
            <person name="Lennard N."/>
            <person name="Logue M.E."/>
            <person name="Martin R."/>
            <person name="Neiman A.M."/>
            <person name="Nikolaou E."/>
            <person name="Quail M.A."/>
            <person name="Quinn J."/>
            <person name="Santos M.C."/>
            <person name="Schmitzberger F.F."/>
            <person name="Sherlock G."/>
            <person name="Shah P."/>
            <person name="Silverstein K.A.T."/>
            <person name="Skrzypek M.S."/>
            <person name="Soll D."/>
            <person name="Staggs R."/>
            <person name="Stansfield I."/>
            <person name="Stumpf M.P.H."/>
            <person name="Sudbery P.E."/>
            <person name="Srikantha T."/>
            <person name="Zeng Q."/>
            <person name="Berman J."/>
            <person name="Berriman M."/>
            <person name="Heitman J."/>
            <person name="Gow N.A.R."/>
            <person name="Lorenz M.C."/>
            <person name="Birren B.W."/>
            <person name="Kellis M."/>
            <person name="Cuomo C.A."/>
        </authorList>
    </citation>
    <scope>NUCLEOTIDE SEQUENCE [LARGE SCALE GENOMIC DNA]</scope>
    <source>
        <strain>WO-1</strain>
    </source>
</reference>
<evidence type="ECO:0000255" key="1">
    <source>
        <dbReference type="HAMAP-Rule" id="MF_03154"/>
    </source>
</evidence>
<feature type="chain" id="PRO_0000414354" description="Acireductone dioxygenase">
    <location>
        <begin position="1"/>
        <end position="178"/>
    </location>
</feature>
<feature type="binding site" evidence="1">
    <location>
        <position position="87"/>
    </location>
    <ligand>
        <name>Fe(2+)</name>
        <dbReference type="ChEBI" id="CHEBI:29033"/>
        <note>for iron-dependent acireductone dioxygenase activity</note>
    </ligand>
</feature>
<feature type="binding site" evidence="1">
    <location>
        <position position="87"/>
    </location>
    <ligand>
        <name>Ni(2+)</name>
        <dbReference type="ChEBI" id="CHEBI:49786"/>
        <note>for nickel-dependent acireductone dioxygenase activity</note>
    </ligand>
</feature>
<feature type="binding site" evidence="1">
    <location>
        <position position="89"/>
    </location>
    <ligand>
        <name>Fe(2+)</name>
        <dbReference type="ChEBI" id="CHEBI:29033"/>
        <note>for iron-dependent acireductone dioxygenase activity</note>
    </ligand>
</feature>
<feature type="binding site" evidence="1">
    <location>
        <position position="89"/>
    </location>
    <ligand>
        <name>Ni(2+)</name>
        <dbReference type="ChEBI" id="CHEBI:49786"/>
        <note>for nickel-dependent acireductone dioxygenase activity</note>
    </ligand>
</feature>
<feature type="binding site" evidence="1">
    <location>
        <position position="93"/>
    </location>
    <ligand>
        <name>Fe(2+)</name>
        <dbReference type="ChEBI" id="CHEBI:29033"/>
        <note>for iron-dependent acireductone dioxygenase activity</note>
    </ligand>
</feature>
<feature type="binding site" evidence="1">
    <location>
        <position position="93"/>
    </location>
    <ligand>
        <name>Ni(2+)</name>
        <dbReference type="ChEBI" id="CHEBI:49786"/>
        <note>for nickel-dependent acireductone dioxygenase activity</note>
    </ligand>
</feature>
<feature type="binding site" evidence="1">
    <location>
        <position position="132"/>
    </location>
    <ligand>
        <name>Fe(2+)</name>
        <dbReference type="ChEBI" id="CHEBI:29033"/>
        <note>for iron-dependent acireductone dioxygenase activity</note>
    </ligand>
</feature>
<feature type="binding site" evidence="1">
    <location>
        <position position="132"/>
    </location>
    <ligand>
        <name>Ni(2+)</name>
        <dbReference type="ChEBI" id="CHEBI:49786"/>
        <note>for nickel-dependent acireductone dioxygenase activity</note>
    </ligand>
</feature>
<comment type="function">
    <text evidence="1">Catalyzes 2 different reactions between oxygen and the acireductone 1,2-dihydroxy-3-keto-5-methylthiopentene (DHK-MTPene) depending upon the metal bound in the active site. Fe-containing acireductone dioxygenase (Fe-ARD) produces formate and 2-keto-4-methylthiobutyrate (KMTB), the alpha-ketoacid precursor of methionine in the methionine recycle pathway. Ni-containing acireductone dioxygenase (Ni-ARD) produces methylthiopropionate, carbon monoxide and formate, and does not lie on the methionine recycle pathway.</text>
</comment>
<comment type="catalytic activity">
    <reaction evidence="1">
        <text>1,2-dihydroxy-5-(methylsulfanyl)pent-1-en-3-one + O2 = 4-methylsulfanyl-2-oxobutanoate + formate + 2 H(+)</text>
        <dbReference type="Rhea" id="RHEA:24504"/>
        <dbReference type="ChEBI" id="CHEBI:15378"/>
        <dbReference type="ChEBI" id="CHEBI:15379"/>
        <dbReference type="ChEBI" id="CHEBI:15740"/>
        <dbReference type="ChEBI" id="CHEBI:16723"/>
        <dbReference type="ChEBI" id="CHEBI:49252"/>
        <dbReference type="EC" id="1.13.11.54"/>
    </reaction>
</comment>
<comment type="catalytic activity">
    <reaction evidence="1">
        <text>1,2-dihydroxy-5-(methylsulfanyl)pent-1-en-3-one + O2 = 3-(methylsulfanyl)propanoate + CO + formate + 2 H(+)</text>
        <dbReference type="Rhea" id="RHEA:14161"/>
        <dbReference type="ChEBI" id="CHEBI:15378"/>
        <dbReference type="ChEBI" id="CHEBI:15379"/>
        <dbReference type="ChEBI" id="CHEBI:15740"/>
        <dbReference type="ChEBI" id="CHEBI:17245"/>
        <dbReference type="ChEBI" id="CHEBI:49016"/>
        <dbReference type="ChEBI" id="CHEBI:49252"/>
        <dbReference type="EC" id="1.13.11.53"/>
    </reaction>
</comment>
<comment type="cofactor">
    <cofactor evidence="1">
        <name>Fe(2+)</name>
        <dbReference type="ChEBI" id="CHEBI:29033"/>
    </cofactor>
    <cofactor evidence="1">
        <name>Ni(2+)</name>
        <dbReference type="ChEBI" id="CHEBI:49786"/>
    </cofactor>
    <text evidence="1">Binds either 1 Fe or Ni cation per monomer. Iron-binding promotes an acireductone dioxygenase reaction producing 2-keto-4-methylthiobutyrate, while nickel-binding promotes an acireductone dioxygenase reaction producing 3-(methylsulfanyl)propanoate.</text>
</comment>
<comment type="pathway">
    <text evidence="1">Amino-acid biosynthesis; L-methionine biosynthesis via salvage pathway; L-methionine from S-methyl-5-thio-alpha-D-ribose 1-phosphate: step 5/6.</text>
</comment>
<comment type="subcellular location">
    <subcellularLocation>
        <location evidence="1">Cytoplasm</location>
    </subcellularLocation>
    <subcellularLocation>
        <location evidence="1">Nucleus</location>
    </subcellularLocation>
</comment>
<comment type="similarity">
    <text evidence="1">Belongs to the acireductone dioxygenase (ARD) family.</text>
</comment>
<sequence length="178" mass="21008">MVEFYFHDNKDTLENFTEDHNSGEPVSFDQLAEIGVIYKYITTQEELDALATEREYKNRDVVTLNLPAFNNDIDAYNAKMQQFYKEHYHEDEEIRYIAEGEGYFDVRDKQDRWIRAKLSPYDLLILPAGIYHRFTLTNAAKHVKAVRLFKDEPKWEAINRDTGKNTEARELYAKTIAV</sequence>
<accession>C4YCU0</accession>
<protein>
    <recommendedName>
        <fullName evidence="1">Acireductone dioxygenase</fullName>
    </recommendedName>
    <alternativeName>
        <fullName evidence="1">Acireductone dioxygenase (Fe(2+)-requiring)</fullName>
        <shortName evidence="1">ARD'</shortName>
        <shortName evidence="1">Fe-ARD</shortName>
        <ecNumber evidence="1">1.13.11.54</ecNumber>
    </alternativeName>
    <alternativeName>
        <fullName evidence="1">Acireductone dioxygenase (Ni(2+)-requiring)</fullName>
        <shortName evidence="1">ARD</shortName>
        <shortName evidence="1">Ni-ARD</shortName>
        <ecNumber evidence="1">1.13.11.53</ecNumber>
    </alternativeName>
</protein>
<name>MTND_CANAW</name>